<organism>
    <name type="scientific">Oryza sativa subsp. japonica</name>
    <name type="common">Rice</name>
    <dbReference type="NCBI Taxonomy" id="39947"/>
    <lineage>
        <taxon>Eukaryota</taxon>
        <taxon>Viridiplantae</taxon>
        <taxon>Streptophyta</taxon>
        <taxon>Embryophyta</taxon>
        <taxon>Tracheophyta</taxon>
        <taxon>Spermatophyta</taxon>
        <taxon>Magnoliopsida</taxon>
        <taxon>Liliopsida</taxon>
        <taxon>Poales</taxon>
        <taxon>Poaceae</taxon>
        <taxon>BOP clade</taxon>
        <taxon>Oryzoideae</taxon>
        <taxon>Oryzeae</taxon>
        <taxon>Oryzinae</taxon>
        <taxon>Oryza</taxon>
        <taxon>Oryza sativa</taxon>
    </lineage>
</organism>
<comment type="function">
    <text evidence="1">May be involved in the transport of nicotianamine-chelated metals.</text>
</comment>
<comment type="subcellular location">
    <subcellularLocation>
        <location evidence="4">Membrane</location>
        <topology evidence="4">Multi-pass membrane protein</topology>
    </subcellularLocation>
</comment>
<comment type="tissue specificity">
    <text evidence="3">Expressed in root epidermis and exoderm.</text>
</comment>
<comment type="similarity">
    <text evidence="4">Belongs to the YSL (TC 2.A.67.2) family.</text>
</comment>
<comment type="sequence caution" evidence="4">
    <conflict type="erroneous initiation">
        <sequence resource="EMBL-CDS" id="BAD07718"/>
    </conflict>
</comment>
<comment type="sequence caution" evidence="4">
    <conflict type="erroneous initiation">
        <sequence resource="EMBL-CDS" id="EAZ21496"/>
    </conflict>
</comment>
<sequence>MMAAAAGEGEAEVTREVISVSTEKAFEGKALPAWSEQITVRSLVVSAVLGTFLSFIVMKLNLTSGIVPSLNVSAGLLAFFLMKTWTSALERCGVFPKPFTRQENTVVQTCVISCSSIAFSGGFGTYILGMSKKIAEGFDEAEAKTSINVEEPSLGRLIAFLFLVSFVGLFSIVPLRKIMIISYKLTYPSGSATAHLINSFHTPQGAIQAKHQVSILFKSFVGSFLWSLFQWFYAAGPGCGFSSFPTFGMVAYSRRFYFDFSATYVGVGMICPYIINFSLLIGSVVSWGIMWPYIESKKGSWYDAGLPKSSLHGLNGYQVFISIAMIVGDGLFNFFSIVLRTAYDLYLKRRGGASKQPQETPFAGATGTERQVLSFDDRRRTQVFLKDQIPTTIAAAAYVLLAAISVVAIPHIFRQLRPKHVVWAYVVAPLFAFCNAYGTGLTDWSLSSSYGKLAIFIFGANIGAKDGGVVAGLAACGLMMGIVSTASDLVQDFKTGYLTLTSPRSMFVSQVLGTGMGCIISPMVFWMFYKANNIGMEEGFPAPYAKIYRGIALLGVNGWDQLPRYCLRFCLAFFLLAIAICALKEVAKQRGWWIQDFIPSALGMAVPFFLGSFFTIDMCVGSLVLFLWSRSDPVRAHTFAPAVASGLICGDGIWSLPSSILSLANVNPPMCMRVFSTATNDKVQLFLRTLPTPP</sequence>
<accession>Q0E4J6</accession>
<accession>A0A0N7KEK3</accession>
<accession>Q25CH8</accession>
<accession>Q6ZGM6</accession>
<gene>
    <name type="primary">YSL8</name>
    <name type="ordered locus">Os02g0116400</name>
    <name type="ordered locus">LOC_Os02g02460</name>
    <name type="ORF">OJ1442_E05.17</name>
    <name type="ORF">OsJ_004979</name>
</gene>
<evidence type="ECO:0000250" key="1"/>
<evidence type="ECO:0000255" key="2"/>
<evidence type="ECO:0000269" key="3">
    <source>
    </source>
</evidence>
<evidence type="ECO:0000305" key="4"/>
<dbReference type="EMBL" id="AB190918">
    <property type="protein sequence ID" value="BAE91888.1"/>
    <property type="molecule type" value="mRNA"/>
</dbReference>
<dbReference type="EMBL" id="AP004121">
    <property type="protein sequence ID" value="BAD07718.1"/>
    <property type="status" value="ALT_INIT"/>
    <property type="molecule type" value="Genomic_DNA"/>
</dbReference>
<dbReference type="EMBL" id="AP008208">
    <property type="protein sequence ID" value="BAF07592.1"/>
    <property type="molecule type" value="Genomic_DNA"/>
</dbReference>
<dbReference type="EMBL" id="AP014958">
    <property type="protein sequence ID" value="BAS76657.1"/>
    <property type="molecule type" value="Genomic_DNA"/>
</dbReference>
<dbReference type="EMBL" id="CM000139">
    <property type="protein sequence ID" value="EAZ21496.1"/>
    <property type="status" value="ALT_INIT"/>
    <property type="molecule type" value="Genomic_DNA"/>
</dbReference>
<dbReference type="RefSeq" id="XP_015626364.1">
    <property type="nucleotide sequence ID" value="XM_015770878.1"/>
</dbReference>
<dbReference type="SMR" id="Q0E4J6"/>
<dbReference type="FunCoup" id="Q0E4J6">
    <property type="interactions" value="52"/>
</dbReference>
<dbReference type="STRING" id="39947.Q0E4J6"/>
<dbReference type="PaxDb" id="39947-Q0E4J6"/>
<dbReference type="EnsemblPlants" id="Os02t0116400-01">
    <property type="protein sequence ID" value="Os02t0116400-01"/>
    <property type="gene ID" value="Os02g0116400"/>
</dbReference>
<dbReference type="Gramene" id="Os02t0116400-01">
    <property type="protein sequence ID" value="Os02t0116400-01"/>
    <property type="gene ID" value="Os02g0116400"/>
</dbReference>
<dbReference type="KEGG" id="dosa:Os02g0116400"/>
<dbReference type="eggNOG" id="ENOG502QQ2H">
    <property type="taxonomic scope" value="Eukaryota"/>
</dbReference>
<dbReference type="HOGENOM" id="CLU_015477_2_0_1"/>
<dbReference type="InParanoid" id="Q0E4J6"/>
<dbReference type="OMA" id="CIISPMV"/>
<dbReference type="OrthoDB" id="627262at2759"/>
<dbReference type="Proteomes" id="UP000000763">
    <property type="component" value="Chromosome 2"/>
</dbReference>
<dbReference type="Proteomes" id="UP000007752">
    <property type="component" value="Chromosome 2"/>
</dbReference>
<dbReference type="Proteomes" id="UP000059680">
    <property type="component" value="Chromosome 2"/>
</dbReference>
<dbReference type="GO" id="GO:0016020">
    <property type="term" value="C:membrane"/>
    <property type="evidence" value="ECO:0000318"/>
    <property type="project" value="GO_Central"/>
</dbReference>
<dbReference type="GO" id="GO:0035673">
    <property type="term" value="F:oligopeptide transmembrane transporter activity"/>
    <property type="evidence" value="ECO:0007669"/>
    <property type="project" value="InterPro"/>
</dbReference>
<dbReference type="InterPro" id="IPR004813">
    <property type="entry name" value="OPT"/>
</dbReference>
<dbReference type="InterPro" id="IPR045035">
    <property type="entry name" value="YSL-like"/>
</dbReference>
<dbReference type="NCBIfam" id="TIGR00728">
    <property type="entry name" value="OPT_sfam"/>
    <property type="match status" value="1"/>
</dbReference>
<dbReference type="PANTHER" id="PTHR31645:SF22">
    <property type="entry name" value="METAL-NICOTIANAMINE TRANSPORTER YSL7-RELATED"/>
    <property type="match status" value="1"/>
</dbReference>
<dbReference type="PANTHER" id="PTHR31645">
    <property type="entry name" value="OLIGOPEPTIDE TRANSPORTER YGL114W-RELATED"/>
    <property type="match status" value="1"/>
</dbReference>
<dbReference type="Pfam" id="PF03169">
    <property type="entry name" value="OPT"/>
    <property type="match status" value="1"/>
</dbReference>
<name>YSL8_ORYSJ</name>
<protein>
    <recommendedName>
        <fullName>Probable metal-nicotianamine transporter YSL8</fullName>
    </recommendedName>
    <alternativeName>
        <fullName>Protein YELLOW STRIPE LIKE 8</fullName>
        <shortName>OsYSL8</shortName>
    </alternativeName>
</protein>
<reference key="1">
    <citation type="journal article" date="2004" name="Plant J.">
        <title>OsYSL2 is a rice metal-nicotianamine transporter that is regulated by iron and expressed in the phloem.</title>
        <authorList>
            <person name="Koike S."/>
            <person name="Inoue H."/>
            <person name="Mizuno D."/>
            <person name="Takahashi M."/>
            <person name="Nakanishi H."/>
            <person name="Mori S."/>
            <person name="Nishizawa N.K."/>
        </authorList>
    </citation>
    <scope>NUCLEOTIDE SEQUENCE [MRNA]</scope>
    <scope>GENE FAMILY</scope>
    <scope>NOMENCLATURE</scope>
    <source>
        <strain>cv. Nipponbare</strain>
    </source>
</reference>
<reference key="2">
    <citation type="journal article" date="2005" name="Nature">
        <title>The map-based sequence of the rice genome.</title>
        <authorList>
            <consortium name="International rice genome sequencing project (IRGSP)"/>
        </authorList>
    </citation>
    <scope>NUCLEOTIDE SEQUENCE [LARGE SCALE GENOMIC DNA]</scope>
    <source>
        <strain>cv. Nipponbare</strain>
    </source>
</reference>
<reference key="3">
    <citation type="journal article" date="2008" name="Nucleic Acids Res.">
        <title>The rice annotation project database (RAP-DB): 2008 update.</title>
        <authorList>
            <consortium name="The rice annotation project (RAP)"/>
        </authorList>
    </citation>
    <scope>GENOME REANNOTATION</scope>
    <source>
        <strain>cv. Nipponbare</strain>
    </source>
</reference>
<reference key="4">
    <citation type="journal article" date="2013" name="Rice">
        <title>Improvement of the Oryza sativa Nipponbare reference genome using next generation sequence and optical map data.</title>
        <authorList>
            <person name="Kawahara Y."/>
            <person name="de la Bastide M."/>
            <person name="Hamilton J.P."/>
            <person name="Kanamori H."/>
            <person name="McCombie W.R."/>
            <person name="Ouyang S."/>
            <person name="Schwartz D.C."/>
            <person name="Tanaka T."/>
            <person name="Wu J."/>
            <person name="Zhou S."/>
            <person name="Childs K.L."/>
            <person name="Davidson R.M."/>
            <person name="Lin H."/>
            <person name="Quesada-Ocampo L."/>
            <person name="Vaillancourt B."/>
            <person name="Sakai H."/>
            <person name="Lee S.S."/>
            <person name="Kim J."/>
            <person name="Numa H."/>
            <person name="Itoh T."/>
            <person name="Buell C.R."/>
            <person name="Matsumoto T."/>
        </authorList>
    </citation>
    <scope>GENOME REANNOTATION</scope>
    <source>
        <strain>cv. Nipponbare</strain>
    </source>
</reference>
<reference key="5">
    <citation type="journal article" date="2005" name="PLoS Biol.">
        <title>The genomes of Oryza sativa: a history of duplications.</title>
        <authorList>
            <person name="Yu J."/>
            <person name="Wang J."/>
            <person name="Lin W."/>
            <person name="Li S."/>
            <person name="Li H."/>
            <person name="Zhou J."/>
            <person name="Ni P."/>
            <person name="Dong W."/>
            <person name="Hu S."/>
            <person name="Zeng C."/>
            <person name="Zhang J."/>
            <person name="Zhang Y."/>
            <person name="Li R."/>
            <person name="Xu Z."/>
            <person name="Li S."/>
            <person name="Li X."/>
            <person name="Zheng H."/>
            <person name="Cong L."/>
            <person name="Lin L."/>
            <person name="Yin J."/>
            <person name="Geng J."/>
            <person name="Li G."/>
            <person name="Shi J."/>
            <person name="Liu J."/>
            <person name="Lv H."/>
            <person name="Li J."/>
            <person name="Wang J."/>
            <person name="Deng Y."/>
            <person name="Ran L."/>
            <person name="Shi X."/>
            <person name="Wang X."/>
            <person name="Wu Q."/>
            <person name="Li C."/>
            <person name="Ren X."/>
            <person name="Wang J."/>
            <person name="Wang X."/>
            <person name="Li D."/>
            <person name="Liu D."/>
            <person name="Zhang X."/>
            <person name="Ji Z."/>
            <person name="Zhao W."/>
            <person name="Sun Y."/>
            <person name="Zhang Z."/>
            <person name="Bao J."/>
            <person name="Han Y."/>
            <person name="Dong L."/>
            <person name="Ji J."/>
            <person name="Chen P."/>
            <person name="Wu S."/>
            <person name="Liu J."/>
            <person name="Xiao Y."/>
            <person name="Bu D."/>
            <person name="Tan J."/>
            <person name="Yang L."/>
            <person name="Ye C."/>
            <person name="Zhang J."/>
            <person name="Xu J."/>
            <person name="Zhou Y."/>
            <person name="Yu Y."/>
            <person name="Zhang B."/>
            <person name="Zhuang S."/>
            <person name="Wei H."/>
            <person name="Liu B."/>
            <person name="Lei M."/>
            <person name="Yu H."/>
            <person name="Li Y."/>
            <person name="Xu H."/>
            <person name="Wei S."/>
            <person name="He X."/>
            <person name="Fang L."/>
            <person name="Zhang Z."/>
            <person name="Zhang Y."/>
            <person name="Huang X."/>
            <person name="Su Z."/>
            <person name="Tong W."/>
            <person name="Li J."/>
            <person name="Tong Z."/>
            <person name="Li S."/>
            <person name="Ye J."/>
            <person name="Wang L."/>
            <person name="Fang L."/>
            <person name="Lei T."/>
            <person name="Chen C.-S."/>
            <person name="Chen H.-C."/>
            <person name="Xu Z."/>
            <person name="Li H."/>
            <person name="Huang H."/>
            <person name="Zhang F."/>
            <person name="Xu H."/>
            <person name="Li N."/>
            <person name="Zhao C."/>
            <person name="Li S."/>
            <person name="Dong L."/>
            <person name="Huang Y."/>
            <person name="Li L."/>
            <person name="Xi Y."/>
            <person name="Qi Q."/>
            <person name="Li W."/>
            <person name="Zhang B."/>
            <person name="Hu W."/>
            <person name="Zhang Y."/>
            <person name="Tian X."/>
            <person name="Jiao Y."/>
            <person name="Liang X."/>
            <person name="Jin J."/>
            <person name="Gao L."/>
            <person name="Zheng W."/>
            <person name="Hao B."/>
            <person name="Liu S.-M."/>
            <person name="Wang W."/>
            <person name="Yuan L."/>
            <person name="Cao M."/>
            <person name="McDermott J."/>
            <person name="Samudrala R."/>
            <person name="Wang J."/>
            <person name="Wong G.K.-S."/>
            <person name="Yang H."/>
        </authorList>
    </citation>
    <scope>NUCLEOTIDE SEQUENCE [LARGE SCALE GENOMIC DNA]</scope>
    <source>
        <strain>cv. Nipponbare</strain>
    </source>
</reference>
<reference key="6">
    <citation type="journal article" date="2009" name="J. Biol. Chem.">
        <title>Rice OsYSL15 is an iron-regulated iron(III)-deoxymugineic acid Transporter expressed in the roots and is essential for iron uptake in early growth of the seedlings.</title>
        <authorList>
            <person name="Inoue H."/>
            <person name="Kobayashi T."/>
            <person name="Nozoye T."/>
            <person name="Takahashi M."/>
            <person name="Kakei Y."/>
            <person name="Suzuki K."/>
            <person name="Nakazono M."/>
            <person name="Nakanishi H."/>
            <person name="Mori S."/>
            <person name="Nishizawa N.K."/>
        </authorList>
    </citation>
    <scope>TISSUE SPECIFICITY</scope>
</reference>
<keyword id="KW-0472">Membrane</keyword>
<keyword id="KW-1185">Reference proteome</keyword>
<keyword id="KW-0812">Transmembrane</keyword>
<keyword id="KW-1133">Transmembrane helix</keyword>
<keyword id="KW-0813">Transport</keyword>
<feature type="chain" id="PRO_0000363871" description="Probable metal-nicotianamine transporter YSL8">
    <location>
        <begin position="1"/>
        <end position="694"/>
    </location>
</feature>
<feature type="transmembrane region" description="Helical" evidence="2">
    <location>
        <begin position="38"/>
        <end position="58"/>
    </location>
</feature>
<feature type="transmembrane region" description="Helical" evidence="2">
    <location>
        <begin position="62"/>
        <end position="82"/>
    </location>
</feature>
<feature type="transmembrane region" description="Helical" evidence="2">
    <location>
        <begin position="110"/>
        <end position="130"/>
    </location>
</feature>
<feature type="transmembrane region" description="Helical" evidence="2">
    <location>
        <begin position="154"/>
        <end position="174"/>
    </location>
</feature>
<feature type="transmembrane region" description="Helical" evidence="2">
    <location>
        <begin position="215"/>
        <end position="235"/>
    </location>
</feature>
<feature type="transmembrane region" description="Helical" evidence="2">
    <location>
        <begin position="265"/>
        <end position="285"/>
    </location>
</feature>
<feature type="transmembrane region" description="Helical" evidence="2">
    <location>
        <begin position="319"/>
        <end position="339"/>
    </location>
</feature>
<feature type="transmembrane region" description="Helical" evidence="2">
    <location>
        <begin position="393"/>
        <end position="413"/>
    </location>
</feature>
<feature type="transmembrane region" description="Helical" evidence="2">
    <location>
        <begin position="421"/>
        <end position="441"/>
    </location>
</feature>
<feature type="transmembrane region" description="Helical" evidence="2">
    <location>
        <begin position="467"/>
        <end position="487"/>
    </location>
</feature>
<feature type="transmembrane region" description="Helical" evidence="2">
    <location>
        <begin position="506"/>
        <end position="526"/>
    </location>
</feature>
<feature type="transmembrane region" description="Helical" evidence="2">
    <location>
        <begin position="567"/>
        <end position="587"/>
    </location>
</feature>
<feature type="transmembrane region" description="Helical" evidence="2">
    <location>
        <begin position="608"/>
        <end position="628"/>
    </location>
</feature>
<feature type="transmembrane region" description="Helical" evidence="2">
    <location>
        <begin position="643"/>
        <end position="663"/>
    </location>
</feature>
<feature type="sequence conflict" description="In Ref. 1; BAE91888." evidence="4" ref="1">
    <original>I</original>
    <variation>V</variation>
    <location>
        <position position="281"/>
    </location>
</feature>
<proteinExistence type="evidence at transcript level"/>